<accession>P70398</accession>
<accession>E9QLY0</accession>
<accession>Q62497</accession>
<gene>
    <name evidence="12 15" type="primary">Usp9x</name>
    <name type="synonym">Fafl</name>
    <name evidence="11" type="synonym">Fam</name>
</gene>
<sequence>MTATTRGSPVGGNDNQGQAPDGQSQPPLQQNQTSSPDSSNENSPATPPDEQGQGDAPPQIEDEEPAFPHTDLAKLDDMINRPRWVVPVLPKGELEVLLEAAIDLSKKGLDVKSEACQRFFRDGLTISFTKILTDEAVSGWKFEIHRCIINNTHRLVELCVAKLAQDWFPLLELLAMALNPHCKFHIYNGTRPCESVSSSVQLPEDELFARSPDPRSPKGWLVDLLNKFGTLNGFQILHDRFINGSALNVQIIAALIKPFGQCYEFLTLHTVKKYFLPIIEMVPQFLENLTDEELKKEAKNEAKNDALSMIIKSLKNLASRVPGQEETVKNLEIFRLKMILRLLQISSFNGKMNALNEVNKVISSVSYYTHRHGSSEDEEWLTAERMAEWIQQNNILSIVLRDSLHQPQYVEKLEKILRFVIKEKALTLQDLDNIWAAQAGKHEAIVKNVHDLLAKLAWDFSPEQLDHLFDCFKASWTNASKKQREKLLELIRRLAEDDKDGVMAHKVLNLLWNLAHSDDVPVDIMDLALSAHIKILDYSCSQDRDTQKIQWIDRFIEELRTNDKWVIPALKQIREICSLFGEAPQNLSQSQRSPHVFYRHDLINQLQHNHALVTLVAENLATYMESMRMYGRDNEDYDPQTVRLGSRYSHVQEVQERLNFLRFLLKDGQLWLCAPQAKQIWKCLAENAVYLCDREACFKWYSKLMGDEPDLDPDINKDFFESNVLQLDPSLLTENGMKCFERFFKAVNCREGKLVAKRRAYMMDDLELIGLDYLWRVVIQSNDDIACRAIDLLKEIYTNLGPRLQVNQVVIHEDFIQSCFDRLKASYDTLCVLDGDKDSINCARQEAVRMVRVLTVLREYINECDSDYHEERTILPMSRAFRGKHLSFIVRFPNQGRQVDDLEVWSHTNDTIGSVRRCILNRIKANVAHTKIELFVGGELIDPGDDRKLIGQLNLKDKSLITAKLTQISSNMPSSPDSSSDSSTGSPGNHGNHYSDGPNPEVESCLPGVIMSLHPRYISFLWQVADLGSSLNMPPLRDGARVLMKLMPPDSTTIEKLRAICLDHAKLGESSLSPSLDSLFFGPSASQVLYLTEVVYALLMPAGAPLTDDSSDFQFHFLKSGGLPLVLSMLTRNNFLPNADMETRRGAYLNALKIAKLLLTAIGYGHVRAVAEACQPGVEGVNPMTSVNQVTHDQAVVLQSALQSIPNPSSECMLRNVSVRLAQQISDEASRYMPDICVIRAIQKIIWTSGCGGLQLVFSPNEEVTKIYEKTNAGNEPDLEDEQVCCEALEVMTLCFALIPTALDALSKEKAWQTFIIDLLLHCHSKTVRQVAQEQFFLMCTRCCMGHRPLLFFITLLFTVLGSTARERAKHSGDYFTLLRHLLNYAYNSNINVPNAEVLLNNEIDWLKRIRDDVKRTGETGVEETILEGHLGVTKELLAFQTPEKKFHIGCEKGGANLIKELIDDFIFPASNVYLQYMRNGELPAEQAIPVCGSPATINAGFELLVALAVGCVRNLKQIVDSLTEMYYIGTAITTCEALTEWEYLPPVGPRPPKGFVGLKNAGATCYMNSVIQQLYMIPSIRNGILAIEGTGSDVDDDMSGDEKQDNESNVDPRDDVFGYPQQFEDKPPLSKTEDRKEYNIGVLRHLQVIFGHLAASRLQYYVPRGFWKQFRLWGEPVNLREQHDALEFFNSLVDSLDEALKALGHPAMLSKVLGGSFADQKICQGCPHRYECEESFTTLNVDIRNHQNLLDSLEQYVKGDLLEGANAYHCEKCNKKVDTVKRLLIKKLPPVLAIQLKRFDYDWERECAIKFNDYFEFPRELDMEPYTVAGVAKLEGDNVNPESQLIQQNEQSESEKAGSTKYRLVGVLVHSGQASGGHYYSYIIQRNGGDGEKNRWYKFDDGDVTECKMDDDEEMKNQCFGGEYMGEVFDHMMKRMSYRRQKRWWNAYILFYERMDTIGHDDEVIRYISEIAITTRPHQIVMPSAIERSVRKQNVQFMHNRMQYSLEYFQFMKKLLTCNGVYLNPPPGQDHLSPEAEEITMISIQLAARFLFTTGFHTKKIVRGSASDWYDALCILLRHSKNVRFWFAHNVLFNVSNRFSEYLLECPSAEVRGAFAKLIVFIAHFSLQDGPCPSPFASPGPSSQAYDNLSLSDHLLRAVLNLLRREVSEHGRHLQQYFNLFVMYANLGVAEKTQLLKLSVPATFMLVSLDEGPGPPIKYQYAELGKLYSVVSQLIRCCNVSSRMQSSINGNPSLPNPFGDPNLSQPIMPIQQNVVDILFVRTSYVKKIIEDCSNSDETVKLLRFCCWENPQFSSTVLSELLWQVAYSYTYELRPYLDLLLQILLIEDSWQTHRIHNALKGIPDDRDGLFDTIQRSKNHYQKRAYQCIKCMVALFSSCPVAYQILQGNGDLKRKWTWAVEWLGDELERRPYTGNPQYTYNNWSPPVQSNETSNGYFLERSHSARMTLAKACELCPEEEPDDQDAPDEHESPPPEDAPLYPHSPGSQYQQNNHVHGQPYTGPAAHHMNNPQRTGQRAQENYEGGEEVSPPQTKGSVKCTY</sequence>
<feature type="chain" id="PRO_0000080691" description="Ubiquitin carboxyl-terminal hydrolase 9X">
    <location>
        <begin position="1"/>
        <end position="2559"/>
    </location>
</feature>
<feature type="domain" description="USP">
    <location>
        <begin position="1557"/>
        <end position="1956"/>
    </location>
</feature>
<feature type="region of interest" description="Disordered" evidence="4">
    <location>
        <begin position="1"/>
        <end position="64"/>
    </location>
</feature>
<feature type="region of interest" description="Disordered" evidence="4">
    <location>
        <begin position="967"/>
        <end position="999"/>
    </location>
</feature>
<feature type="region of interest" description="Disordered" evidence="4">
    <location>
        <begin position="1592"/>
        <end position="1633"/>
    </location>
</feature>
<feature type="region of interest" description="Disordered" evidence="4">
    <location>
        <begin position="2475"/>
        <end position="2559"/>
    </location>
</feature>
<feature type="compositionally biased region" description="Polar residues" evidence="4">
    <location>
        <begin position="1"/>
        <end position="44"/>
    </location>
</feature>
<feature type="compositionally biased region" description="Low complexity" evidence="4">
    <location>
        <begin position="969"/>
        <end position="989"/>
    </location>
</feature>
<feature type="compositionally biased region" description="Basic and acidic residues" evidence="4">
    <location>
        <begin position="1601"/>
        <end position="1617"/>
    </location>
</feature>
<feature type="compositionally biased region" description="Basic and acidic residues" evidence="4">
    <location>
        <begin position="1624"/>
        <end position="1633"/>
    </location>
</feature>
<feature type="compositionally biased region" description="Acidic residues" evidence="4">
    <location>
        <begin position="2475"/>
        <end position="2484"/>
    </location>
</feature>
<feature type="compositionally biased region" description="Polar residues" evidence="4">
    <location>
        <begin position="2503"/>
        <end position="2513"/>
    </location>
</feature>
<feature type="compositionally biased region" description="Polar residues" evidence="4">
    <location>
        <begin position="2527"/>
        <end position="2537"/>
    </location>
</feature>
<feature type="active site" description="Nucleophile" evidence="2 3 14">
    <location>
        <position position="1566"/>
    </location>
</feature>
<feature type="active site" description="Proton acceptor" evidence="2 3">
    <location>
        <position position="1879"/>
    </location>
</feature>
<feature type="binding site" evidence="1">
    <location>
        <position position="1727"/>
    </location>
    <ligand>
        <name>Zn(2+)</name>
        <dbReference type="ChEBI" id="CHEBI:29105"/>
    </ligand>
</feature>
<feature type="binding site" evidence="1">
    <location>
        <position position="1729"/>
    </location>
    <ligand>
        <name>Zn(2+)</name>
        <dbReference type="ChEBI" id="CHEBI:29105"/>
    </ligand>
</feature>
<feature type="binding site" evidence="1">
    <location>
        <position position="1771"/>
    </location>
    <ligand>
        <name>Zn(2+)</name>
        <dbReference type="ChEBI" id="CHEBI:29105"/>
    </ligand>
</feature>
<feature type="binding site" evidence="1">
    <location>
        <position position="1774"/>
    </location>
    <ligand>
        <name>Zn(2+)</name>
        <dbReference type="ChEBI" id="CHEBI:29105"/>
    </ligand>
</feature>
<feature type="modified residue" description="Phosphoserine" evidence="18">
    <location>
        <position position="374"/>
    </location>
</feature>
<feature type="modified residue" description="Phosphoserine" evidence="18">
    <location>
        <position position="375"/>
    </location>
</feature>
<feature type="modified residue" description="Phosphoserine" evidence="1">
    <location>
        <position position="588"/>
    </location>
</feature>
<feature type="modified residue" description="Phosphoserine" evidence="16 18">
    <location>
        <position position="1600"/>
    </location>
</feature>
<feature type="modified residue" description="Phosphoserine" evidence="18">
    <location>
        <position position="2443"/>
    </location>
</feature>
<feature type="modified residue" description="Phosphotyrosine" evidence="17">
    <location>
        <position position="2540"/>
    </location>
</feature>
<feature type="modified residue" description="Phosphoserine" evidence="1">
    <location>
        <position position="2547"/>
    </location>
</feature>
<feature type="modified residue" description="Phosphothreonine" evidence="1">
    <location>
        <position position="2551"/>
    </location>
</feature>
<feature type="mutagenesis site" description="Abolished deubiquitinase activity." evidence="8">
    <original>C</original>
    <variation>A</variation>
    <location>
        <position position="1566"/>
    </location>
</feature>
<feature type="sequence conflict" description="In Ref. 1; AAB07731." evidence="13" ref="1">
    <original>A</original>
    <variation>P</variation>
    <location>
        <position position="73"/>
    </location>
</feature>
<feature type="sequence conflict" description="In Ref. 3; CAB01555." evidence="13" ref="3">
    <original>C</original>
    <variation>F</variation>
    <location>
        <position position="182"/>
    </location>
</feature>
<feature type="sequence conflict" description="In Ref. 1; AAB07731." evidence="13" ref="1">
    <original>QK</original>
    <variation>HQ</variation>
    <location>
        <begin position="1243"/>
        <end position="1244"/>
    </location>
</feature>
<feature type="sequence conflict" description="In Ref. 1; AAB07731." evidence="13" ref="1">
    <original>D</original>
    <variation>N</variation>
    <location>
        <position position="1626"/>
    </location>
</feature>
<feature type="sequence conflict" description="In Ref. 1; AAB07731." evidence="13" ref="1">
    <original>S</original>
    <variation>I</variation>
    <location>
        <position position="1631"/>
    </location>
</feature>
<feature type="sequence conflict" description="In Ref. 1; AAB07731." evidence="13" ref="1">
    <original>D</original>
    <variation>N</variation>
    <location>
        <position position="1635"/>
    </location>
</feature>
<feature type="sequence conflict" description="In Ref. 1; AAB07731." evidence="13" ref="1">
    <original>E</original>
    <variation>K</variation>
    <location>
        <position position="1638"/>
    </location>
</feature>
<feature type="sequence conflict" description="In Ref. 1; AAB07731." evidence="13" ref="1">
    <original>R</original>
    <variation>K</variation>
    <location>
        <position position="1645"/>
    </location>
</feature>
<feature type="sequence conflict" description="In Ref. 1; AAB07731." evidence="13" ref="1">
    <original>R</original>
    <variation>K</variation>
    <location>
        <position position="1665"/>
    </location>
</feature>
<feature type="sequence conflict" description="In Ref. 1; AAB07731." evidence="13" ref="1">
    <original>F</original>
    <variation>S</variation>
    <location>
        <position position="1671"/>
    </location>
</feature>
<feature type="sequence conflict" description="In Ref. 1; AAB07731." evidence="13" ref="1">
    <original>EF</original>
    <variation>KS</variation>
    <location>
        <begin position="1688"/>
        <end position="1689"/>
    </location>
</feature>
<feature type="sequence conflict" description="In Ref. 1; AAB07731." evidence="13" ref="1">
    <original>N</original>
    <variation>T</variation>
    <location>
        <position position="1918"/>
    </location>
</feature>
<feature type="sequence conflict" description="In Ref. 1; AAB07731." evidence="13" ref="1">
    <original>F</original>
    <variation>L</variation>
    <location>
        <position position="1930"/>
    </location>
</feature>
<protein>
    <recommendedName>
        <fullName>Ubiquitin carboxyl-terminal hydrolase 9X</fullName>
        <ecNumber evidence="5 7 8">3.4.19.12</ecNumber>
    </recommendedName>
    <alternativeName>
        <fullName>Deubiquitinating enzyme FAF-X</fullName>
    </alternativeName>
    <alternativeName>
        <fullName>Fat facets homolog</fullName>
    </alternativeName>
    <alternativeName>
        <fullName>Fat facets protein-related, X-linked</fullName>
    </alternativeName>
    <alternativeName>
        <fullName>Ubiquitin carboxyl-terminal hydrolase FAM</fullName>
    </alternativeName>
    <alternativeName>
        <fullName>Ubiquitin thioesterase FAF-X</fullName>
    </alternativeName>
    <alternativeName>
        <fullName>Ubiquitin-specific protease 9, X chromosome</fullName>
    </alternativeName>
    <alternativeName>
        <fullName>Ubiquitin-specific-processing protease FAF-X</fullName>
    </alternativeName>
</protein>
<name>USP9X_MOUSE</name>
<dbReference type="EC" id="3.4.19.12" evidence="5 7 8"/>
<dbReference type="EMBL" id="U67874">
    <property type="protein sequence ID" value="AAB07731.1"/>
    <property type="molecule type" value="mRNA"/>
</dbReference>
<dbReference type="EMBL" id="AL669967">
    <property type="status" value="NOT_ANNOTATED_CDS"/>
    <property type="molecule type" value="Genomic_DNA"/>
</dbReference>
<dbReference type="EMBL" id="Z78153">
    <property type="protein sequence ID" value="CAB01555.1"/>
    <property type="molecule type" value="mRNA"/>
</dbReference>
<dbReference type="PIR" id="T30850">
    <property type="entry name" value="T30850"/>
</dbReference>
<dbReference type="RefSeq" id="NP_033507.2">
    <property type="nucleotide sequence ID" value="NM_009481.2"/>
</dbReference>
<dbReference type="SMR" id="P70398"/>
<dbReference type="BioGRID" id="204467">
    <property type="interactions" value="43"/>
</dbReference>
<dbReference type="FunCoup" id="P70398">
    <property type="interactions" value="3920"/>
</dbReference>
<dbReference type="IntAct" id="P70398">
    <property type="interactions" value="16"/>
</dbReference>
<dbReference type="MINT" id="P70398"/>
<dbReference type="STRING" id="10090.ENSMUSP00000086716"/>
<dbReference type="MEROPS" id="C19.017"/>
<dbReference type="GlyGen" id="P70398">
    <property type="glycosylation" value="6 sites, 2 N-linked glycans (2 sites), 1 O-linked glycan (3 sites)"/>
</dbReference>
<dbReference type="iPTMnet" id="P70398"/>
<dbReference type="PhosphoSitePlus" id="P70398"/>
<dbReference type="SwissPalm" id="P70398"/>
<dbReference type="jPOST" id="P70398"/>
<dbReference type="PaxDb" id="10090-ENSMUSP00000086716"/>
<dbReference type="PeptideAtlas" id="P70398"/>
<dbReference type="ProteomicsDB" id="300203"/>
<dbReference type="Pumba" id="P70398"/>
<dbReference type="DNASU" id="22284"/>
<dbReference type="GeneID" id="22284"/>
<dbReference type="KEGG" id="mmu:22284"/>
<dbReference type="AGR" id="MGI:894681"/>
<dbReference type="CTD" id="8239"/>
<dbReference type="MGI" id="MGI:894681">
    <property type="gene designation" value="Usp9x"/>
</dbReference>
<dbReference type="eggNOG" id="KOG1866">
    <property type="taxonomic scope" value="Eukaryota"/>
</dbReference>
<dbReference type="InParanoid" id="P70398"/>
<dbReference type="OrthoDB" id="289038at2759"/>
<dbReference type="Reactome" id="R-MMU-2173795">
    <property type="pathway name" value="Downregulation of SMAD2/3:SMAD4 transcriptional activity"/>
</dbReference>
<dbReference type="Reactome" id="R-MMU-5689880">
    <property type="pathway name" value="Ub-specific processing proteases"/>
</dbReference>
<dbReference type="Reactome" id="R-MMU-8866652">
    <property type="pathway name" value="Synthesis of active ubiquitin: roles of E1 and E2 enzymes"/>
</dbReference>
<dbReference type="Reactome" id="R-MMU-9013420">
    <property type="pathway name" value="RHOU GTPase cycle"/>
</dbReference>
<dbReference type="Reactome" id="R-MMU-9013424">
    <property type="pathway name" value="RHOV GTPase cycle"/>
</dbReference>
<dbReference type="Reactome" id="R-MMU-9033241">
    <property type="pathway name" value="Peroxisomal protein import"/>
</dbReference>
<dbReference type="BioGRID-ORCS" id="22284">
    <property type="hits" value="19 hits in 78 CRISPR screens"/>
</dbReference>
<dbReference type="CD-CODE" id="DE1E139C">
    <property type="entry name" value="Chromatoid body"/>
</dbReference>
<dbReference type="ChiTaRS" id="Usp9x">
    <property type="organism name" value="mouse"/>
</dbReference>
<dbReference type="PRO" id="PR:P70398"/>
<dbReference type="Proteomes" id="UP000000589">
    <property type="component" value="Unplaced"/>
</dbReference>
<dbReference type="RNAct" id="P70398">
    <property type="molecule type" value="protein"/>
</dbReference>
<dbReference type="GO" id="GO:0045177">
    <property type="term" value="C:apical part of cell"/>
    <property type="evidence" value="ECO:0000314"/>
    <property type="project" value="MGI"/>
</dbReference>
<dbReference type="GO" id="GO:0005929">
    <property type="term" value="C:cilium"/>
    <property type="evidence" value="ECO:0000250"/>
    <property type="project" value="UniProtKB"/>
</dbReference>
<dbReference type="GO" id="GO:0005737">
    <property type="term" value="C:cytoplasm"/>
    <property type="evidence" value="ECO:0000314"/>
    <property type="project" value="MGI"/>
</dbReference>
<dbReference type="GO" id="GO:0005856">
    <property type="term" value="C:cytoskeleton"/>
    <property type="evidence" value="ECO:0007669"/>
    <property type="project" value="UniProtKB-KW"/>
</dbReference>
<dbReference type="GO" id="GO:0005829">
    <property type="term" value="C:cytosol"/>
    <property type="evidence" value="ECO:0000250"/>
    <property type="project" value="UniProtKB"/>
</dbReference>
<dbReference type="GO" id="GO:0030426">
    <property type="term" value="C:growth cone"/>
    <property type="evidence" value="ECO:0007669"/>
    <property type="project" value="UniProtKB-SubCell"/>
</dbReference>
<dbReference type="GO" id="GO:0098794">
    <property type="term" value="C:postsynapse"/>
    <property type="evidence" value="ECO:0000314"/>
    <property type="project" value="SynGO"/>
</dbReference>
<dbReference type="GO" id="GO:0070410">
    <property type="term" value="F:co-SMAD binding"/>
    <property type="evidence" value="ECO:0000250"/>
    <property type="project" value="BHF-UCL"/>
</dbReference>
<dbReference type="GO" id="GO:0004843">
    <property type="term" value="F:cysteine-type deubiquitinase activity"/>
    <property type="evidence" value="ECO:0000314"/>
    <property type="project" value="UniProtKB"/>
</dbReference>
<dbReference type="GO" id="GO:0004197">
    <property type="term" value="F:cysteine-type endopeptidase activity"/>
    <property type="evidence" value="ECO:0000314"/>
    <property type="project" value="UniProtKB"/>
</dbReference>
<dbReference type="GO" id="GO:0101005">
    <property type="term" value="F:deubiquitinase activity"/>
    <property type="evidence" value="ECO:0000314"/>
    <property type="project" value="UniProtKB"/>
</dbReference>
<dbReference type="GO" id="GO:0180017">
    <property type="term" value="F:K11-linked deubiquitinase activity"/>
    <property type="evidence" value="ECO:0000250"/>
    <property type="project" value="UniProtKB"/>
</dbReference>
<dbReference type="GO" id="GO:1990380">
    <property type="term" value="F:K48-linked deubiquitinase activity"/>
    <property type="evidence" value="ECO:0000250"/>
    <property type="project" value="UniProtKB"/>
</dbReference>
<dbReference type="GO" id="GO:0061578">
    <property type="term" value="F:K63-linked deubiquitinase activity"/>
    <property type="evidence" value="ECO:0000250"/>
    <property type="project" value="UniProtKB"/>
</dbReference>
<dbReference type="GO" id="GO:0046872">
    <property type="term" value="F:metal ion binding"/>
    <property type="evidence" value="ECO:0007669"/>
    <property type="project" value="UniProtKB-KW"/>
</dbReference>
<dbReference type="GO" id="GO:0031625">
    <property type="term" value="F:ubiquitin protein ligase binding"/>
    <property type="evidence" value="ECO:0000353"/>
    <property type="project" value="UniProtKB"/>
</dbReference>
<dbReference type="GO" id="GO:0048675">
    <property type="term" value="P:axon extension"/>
    <property type="evidence" value="ECO:0000315"/>
    <property type="project" value="UniProtKB"/>
</dbReference>
<dbReference type="GO" id="GO:0030509">
    <property type="term" value="P:BMP signaling pathway"/>
    <property type="evidence" value="ECO:0000250"/>
    <property type="project" value="UniProtKB"/>
</dbReference>
<dbReference type="GO" id="GO:0051301">
    <property type="term" value="P:cell division"/>
    <property type="evidence" value="ECO:0007669"/>
    <property type="project" value="UniProtKB-KW"/>
</dbReference>
<dbReference type="GO" id="GO:0071560">
    <property type="term" value="P:cellular response to transforming growth factor beta stimulus"/>
    <property type="evidence" value="ECO:0000315"/>
    <property type="project" value="MGI"/>
</dbReference>
<dbReference type="GO" id="GO:0021698">
    <property type="term" value="P:cerebellar cortex structural organization"/>
    <property type="evidence" value="ECO:0000315"/>
    <property type="project" value="MGI"/>
</dbReference>
<dbReference type="GO" id="GO:0007059">
    <property type="term" value="P:chromosome segregation"/>
    <property type="evidence" value="ECO:0007669"/>
    <property type="project" value="UniProtKB-KW"/>
</dbReference>
<dbReference type="GO" id="GO:0006307">
    <property type="term" value="P:DNA alkylation repair"/>
    <property type="evidence" value="ECO:0000250"/>
    <property type="project" value="UniProtKB"/>
</dbReference>
<dbReference type="GO" id="GO:0021766">
    <property type="term" value="P:hippocampus development"/>
    <property type="evidence" value="ECO:0000315"/>
    <property type="project" value="MGI"/>
</dbReference>
<dbReference type="GO" id="GO:0001701">
    <property type="term" value="P:in utero embryonic development"/>
    <property type="evidence" value="ECO:0000316"/>
    <property type="project" value="MGI"/>
</dbReference>
<dbReference type="GO" id="GO:0035520">
    <property type="term" value="P:monoubiquitinated protein deubiquitination"/>
    <property type="evidence" value="ECO:0000250"/>
    <property type="project" value="UniProtKB"/>
</dbReference>
<dbReference type="GO" id="GO:0032435">
    <property type="term" value="P:negative regulation of proteasomal ubiquitin-dependent protein catabolic process"/>
    <property type="evidence" value="ECO:0000250"/>
    <property type="project" value="UniProtKB"/>
</dbReference>
<dbReference type="GO" id="GO:0001764">
    <property type="term" value="P:neuron migration"/>
    <property type="evidence" value="ECO:0000315"/>
    <property type="project" value="UniProtKB"/>
</dbReference>
<dbReference type="GO" id="GO:1990138">
    <property type="term" value="P:neuron projection extension"/>
    <property type="evidence" value="ECO:0000316"/>
    <property type="project" value="MGI"/>
</dbReference>
<dbReference type="GO" id="GO:0032092">
    <property type="term" value="P:positive regulation of protein binding"/>
    <property type="evidence" value="ECO:0000250"/>
    <property type="project" value="UniProtKB"/>
</dbReference>
<dbReference type="GO" id="GO:1904515">
    <property type="term" value="P:positive regulation of TORC2 signaling"/>
    <property type="evidence" value="ECO:0000250"/>
    <property type="project" value="UniProtKB"/>
</dbReference>
<dbReference type="GO" id="GO:0009791">
    <property type="term" value="P:post-embryonic development"/>
    <property type="evidence" value="ECO:0000315"/>
    <property type="project" value="MGI"/>
</dbReference>
<dbReference type="GO" id="GO:0016579">
    <property type="term" value="P:protein deubiquitination"/>
    <property type="evidence" value="ECO:0000315"/>
    <property type="project" value="UniProtKB"/>
</dbReference>
<dbReference type="GO" id="GO:0071947">
    <property type="term" value="P:protein deubiquitination involved in ubiquitin-dependent protein catabolic process"/>
    <property type="evidence" value="ECO:0000315"/>
    <property type="project" value="UniProtKB"/>
</dbReference>
<dbReference type="GO" id="GO:0016562">
    <property type="term" value="P:protein import into peroxisome matrix, receptor recycling"/>
    <property type="evidence" value="ECO:0000250"/>
    <property type="project" value="UniProtKB"/>
</dbReference>
<dbReference type="GO" id="GO:0070536">
    <property type="term" value="P:protein K63-linked deubiquitination"/>
    <property type="evidence" value="ECO:0000250"/>
    <property type="project" value="UniProtKB"/>
</dbReference>
<dbReference type="GO" id="GO:0050821">
    <property type="term" value="P:protein stabilization"/>
    <property type="evidence" value="ECO:0000250"/>
    <property type="project" value="UniProtKB"/>
</dbReference>
<dbReference type="GO" id="GO:0042752">
    <property type="term" value="P:regulation of circadian rhythm"/>
    <property type="evidence" value="ECO:0000250"/>
    <property type="project" value="UniProtKB"/>
</dbReference>
<dbReference type="GO" id="GO:0150052">
    <property type="term" value="P:regulation of postsynapse assembly"/>
    <property type="evidence" value="ECO:0000314"/>
    <property type="project" value="SynGO"/>
</dbReference>
<dbReference type="GO" id="GO:0050856">
    <property type="term" value="P:regulation of T cell receptor signaling pathway"/>
    <property type="evidence" value="ECO:0000266"/>
    <property type="project" value="MGI"/>
</dbReference>
<dbReference type="GO" id="GO:0048511">
    <property type="term" value="P:rhythmic process"/>
    <property type="evidence" value="ECO:0007669"/>
    <property type="project" value="UniProtKB-KW"/>
</dbReference>
<dbReference type="GO" id="GO:0007179">
    <property type="term" value="P:transforming growth factor beta receptor signaling pathway"/>
    <property type="evidence" value="ECO:0000250"/>
    <property type="project" value="UniProtKB"/>
</dbReference>
<dbReference type="CDD" id="cd02659">
    <property type="entry name" value="peptidase_C19C"/>
    <property type="match status" value="1"/>
</dbReference>
<dbReference type="Gene3D" id="3.90.70.10">
    <property type="entry name" value="Cysteine proteinases"/>
    <property type="match status" value="1"/>
</dbReference>
<dbReference type="InterPro" id="IPR016024">
    <property type="entry name" value="ARM-type_fold"/>
</dbReference>
<dbReference type="InterPro" id="IPR056850">
    <property type="entry name" value="ARM_UBP34_24_USP9X_Y"/>
</dbReference>
<dbReference type="InterPro" id="IPR021905">
    <property type="entry name" value="DUF3517"/>
</dbReference>
<dbReference type="InterPro" id="IPR038765">
    <property type="entry name" value="Papain-like_cys_pep_sf"/>
</dbReference>
<dbReference type="InterPro" id="IPR050164">
    <property type="entry name" value="Peptidase_C19"/>
</dbReference>
<dbReference type="InterPro" id="IPR001394">
    <property type="entry name" value="Peptidase_C19_UCH"/>
</dbReference>
<dbReference type="InterPro" id="IPR055176">
    <property type="entry name" value="UBP24/USP9X/USP9Y_UBL"/>
</dbReference>
<dbReference type="InterPro" id="IPR018200">
    <property type="entry name" value="USP_CS"/>
</dbReference>
<dbReference type="InterPro" id="IPR028889">
    <property type="entry name" value="USP_dom"/>
</dbReference>
<dbReference type="PANTHER" id="PTHR24006">
    <property type="entry name" value="UBIQUITIN CARBOXYL-TERMINAL HYDROLASE"/>
    <property type="match status" value="1"/>
</dbReference>
<dbReference type="PANTHER" id="PTHR24006:SF897">
    <property type="entry name" value="UBIQUITIN CARBOXYL-TERMINAL HYDROLASE FAF-X-RELATED"/>
    <property type="match status" value="1"/>
</dbReference>
<dbReference type="Pfam" id="PF25010">
    <property type="entry name" value="ARM_UBP24_USP9X-Y"/>
    <property type="match status" value="1"/>
</dbReference>
<dbReference type="Pfam" id="PF12030">
    <property type="entry name" value="DUF3517"/>
    <property type="match status" value="1"/>
</dbReference>
<dbReference type="Pfam" id="PF00443">
    <property type="entry name" value="UCH"/>
    <property type="match status" value="1"/>
</dbReference>
<dbReference type="Pfam" id="PF22900">
    <property type="entry name" value="UCH_UBL1"/>
    <property type="match status" value="1"/>
</dbReference>
<dbReference type="SUPFAM" id="SSF48371">
    <property type="entry name" value="ARM repeat"/>
    <property type="match status" value="1"/>
</dbReference>
<dbReference type="SUPFAM" id="SSF54001">
    <property type="entry name" value="Cysteine proteinases"/>
    <property type="match status" value="1"/>
</dbReference>
<dbReference type="PROSITE" id="PS00972">
    <property type="entry name" value="USP_1"/>
    <property type="match status" value="1"/>
</dbReference>
<dbReference type="PROSITE" id="PS00973">
    <property type="entry name" value="USP_2"/>
    <property type="match status" value="1"/>
</dbReference>
<dbReference type="PROSITE" id="PS50235">
    <property type="entry name" value="USP_3"/>
    <property type="match status" value="1"/>
</dbReference>
<organism>
    <name type="scientific">Mus musculus</name>
    <name type="common">Mouse</name>
    <dbReference type="NCBI Taxonomy" id="10090"/>
    <lineage>
        <taxon>Eukaryota</taxon>
        <taxon>Metazoa</taxon>
        <taxon>Chordata</taxon>
        <taxon>Craniata</taxon>
        <taxon>Vertebrata</taxon>
        <taxon>Euteleostomi</taxon>
        <taxon>Mammalia</taxon>
        <taxon>Eutheria</taxon>
        <taxon>Euarchontoglires</taxon>
        <taxon>Glires</taxon>
        <taxon>Rodentia</taxon>
        <taxon>Myomorpha</taxon>
        <taxon>Muroidea</taxon>
        <taxon>Muridae</taxon>
        <taxon>Murinae</taxon>
        <taxon>Mus</taxon>
        <taxon>Mus</taxon>
    </lineage>
</organism>
<keyword id="KW-0090">Biological rhythms</keyword>
<keyword id="KW-0131">Cell cycle</keyword>
<keyword id="KW-0132">Cell division</keyword>
<keyword id="KW-0966">Cell projection</keyword>
<keyword id="KW-0159">Chromosome partition</keyword>
<keyword id="KW-0963">Cytoplasm</keyword>
<keyword id="KW-0206">Cytoskeleton</keyword>
<keyword id="KW-0378">Hydrolase</keyword>
<keyword id="KW-0479">Metal-binding</keyword>
<keyword id="KW-0498">Mitosis</keyword>
<keyword id="KW-0597">Phosphoprotein</keyword>
<keyword id="KW-0645">Protease</keyword>
<keyword id="KW-1185">Reference proteome</keyword>
<keyword id="KW-0788">Thiol protease</keyword>
<keyword id="KW-0833">Ubl conjugation pathway</keyword>
<keyword id="KW-0862">Zinc</keyword>
<proteinExistence type="evidence at protein level"/>
<reference key="1">
    <citation type="journal article" date="1997" name="Mech. Dev.">
        <title>Cloning and expression analysis of a novel mouse gene with sequence similarity to the Drosophila fat facets gene.</title>
        <authorList>
            <person name="Wood S.A."/>
            <person name="Pascoe W.S."/>
            <person name="Ru K."/>
            <person name="Yamada T."/>
            <person name="Hirchenhain J."/>
            <person name="Kemler R."/>
            <person name="Mattick J.S."/>
        </authorList>
    </citation>
    <scope>NUCLEOTIDE SEQUENCE [MRNA]</scope>
    <scope>TISSUE SPECIFICITY</scope>
    <scope>DEVELOPMENTAL STAGE</scope>
</reference>
<reference key="2">
    <citation type="journal article" date="2009" name="PLoS Biol.">
        <title>Lineage-specific biology revealed by a finished genome assembly of the mouse.</title>
        <authorList>
            <person name="Church D.M."/>
            <person name="Goodstadt L."/>
            <person name="Hillier L.W."/>
            <person name="Zody M.C."/>
            <person name="Goldstein S."/>
            <person name="She X."/>
            <person name="Bult C.J."/>
            <person name="Agarwala R."/>
            <person name="Cherry J.L."/>
            <person name="DiCuccio M."/>
            <person name="Hlavina W."/>
            <person name="Kapustin Y."/>
            <person name="Meric P."/>
            <person name="Maglott D."/>
            <person name="Birtle Z."/>
            <person name="Marques A.C."/>
            <person name="Graves T."/>
            <person name="Zhou S."/>
            <person name="Teague B."/>
            <person name="Potamousis K."/>
            <person name="Churas C."/>
            <person name="Place M."/>
            <person name="Herschleb J."/>
            <person name="Runnheim R."/>
            <person name="Forrest D."/>
            <person name="Amos-Landgraf J."/>
            <person name="Schwartz D.C."/>
            <person name="Cheng Z."/>
            <person name="Lindblad-Toh K."/>
            <person name="Eichler E.E."/>
            <person name="Ponting C.P."/>
        </authorList>
    </citation>
    <scope>NUCLEOTIDE SEQUENCE [LARGE SCALE GENOMIC DNA]</scope>
    <source>
        <strain>C57BL/6J</strain>
    </source>
</reference>
<reference key="3">
    <citation type="journal article" date="1997" name="Genomics">
        <title>Cloning of the genes encoding two murine and human cochlear unconventional type I myosins.</title>
        <authorList>
            <person name="Crozet F."/>
            <person name="El-Amraoui A."/>
            <person name="Blanchard S."/>
            <person name="Lenoir M."/>
            <person name="Ripoll C."/>
            <person name="Vago P."/>
            <person name="Hamel C."/>
            <person name="Fizames C."/>
            <person name="Levi-Acobas F."/>
            <person name="Depetris D."/>
            <person name="Mattei M.-G."/>
            <person name="Weil D."/>
            <person name="Pujol R."/>
            <person name="Petit C."/>
        </authorList>
    </citation>
    <scope>NUCLEOTIDE SEQUENCE [MRNA] OF 152-240</scope>
    <source>
        <tissue>Cochlea</tissue>
    </source>
</reference>
<reference key="4">
    <citation type="journal article" date="2003" name="Reprod. Fertil. Dev.">
        <title>Ubiquitin-specific protease activity of USP9Y, a male infertility gene on the Y chromosome.</title>
        <authorList>
            <person name="Lee K.H."/>
            <person name="Song G.J."/>
            <person name="Kang I.S."/>
            <person name="Kim S.W."/>
            <person name="Paick J.S."/>
            <person name="Chung C.H."/>
            <person name="Rhee K."/>
        </authorList>
    </citation>
    <scope>FUNCTION</scope>
    <scope>CATALYTIC ACTIVITY</scope>
</reference>
<reference key="5">
    <citation type="journal article" date="2007" name="J. Immunol.">
        <title>Quantitative time-resolved phosphoproteomic analysis of mast cell signaling.</title>
        <authorList>
            <person name="Cao L."/>
            <person name="Yu K."/>
            <person name="Banh C."/>
            <person name="Nguyen V."/>
            <person name="Ritz A."/>
            <person name="Raphael B.J."/>
            <person name="Kawakami Y."/>
            <person name="Kawakami T."/>
            <person name="Salomon A.R."/>
        </authorList>
    </citation>
    <scope>PHOSPHORYLATION [LARGE SCALE ANALYSIS] AT TYR-2540</scope>
    <scope>IDENTIFICATION BY MASS SPECTROMETRY [LARGE SCALE ANALYSIS]</scope>
    <source>
        <tissue>Mast cell</tissue>
    </source>
</reference>
<reference key="6">
    <citation type="journal article" date="2007" name="Proc. Natl. Acad. Sci. U.S.A.">
        <title>Large-scale phosphorylation analysis of mouse liver.</title>
        <authorList>
            <person name="Villen J."/>
            <person name="Beausoleil S.A."/>
            <person name="Gerber S.A."/>
            <person name="Gygi S.P."/>
        </authorList>
    </citation>
    <scope>PHOSPHORYLATION [LARGE SCALE ANALYSIS] AT SER-1600</scope>
    <scope>IDENTIFICATION BY MASS SPECTROMETRY [LARGE SCALE ANALYSIS]</scope>
    <source>
        <tissue>Liver</tissue>
    </source>
</reference>
<reference key="7">
    <citation type="journal article" date="2010" name="Cell">
        <title>A tissue-specific atlas of mouse protein phosphorylation and expression.</title>
        <authorList>
            <person name="Huttlin E.L."/>
            <person name="Jedrychowski M.P."/>
            <person name="Elias J.E."/>
            <person name="Goswami T."/>
            <person name="Rad R."/>
            <person name="Beausoleil S.A."/>
            <person name="Villen J."/>
            <person name="Haas W."/>
            <person name="Sowa M.E."/>
            <person name="Gygi S.P."/>
        </authorList>
    </citation>
    <scope>PHOSPHORYLATION [LARGE SCALE ANALYSIS] AT SER-374; SER-375; SER-1600 AND SER-2443</scope>
    <scope>IDENTIFICATION BY MASS SPECTROMETRY [LARGE SCALE ANALYSIS]</scope>
    <source>
        <tissue>Brain</tissue>
        <tissue>Brown adipose tissue</tissue>
        <tissue>Heart</tissue>
        <tissue>Kidney</tissue>
        <tissue>Liver</tissue>
        <tissue>Lung</tissue>
        <tissue>Pancreas</tissue>
        <tissue>Spleen</tissue>
        <tissue>Testis</tissue>
    </source>
</reference>
<reference key="8">
    <citation type="journal article" date="2014" name="Am. J. Hum. Genet.">
        <title>Mutations in USP9X are associated with X-linked intellectual disability and disrupt neuronal cell migration and growth.</title>
        <authorList>
            <person name="Homan C.C."/>
            <person name="Kumar R."/>
            <person name="Nguyen L.S."/>
            <person name="Haan E."/>
            <person name="Raymond F.L."/>
            <person name="Abidi F."/>
            <person name="Raynaud M."/>
            <person name="Schwartz C.E."/>
            <person name="Wood S.A."/>
            <person name="Gecz J."/>
            <person name="Jolly L.A."/>
        </authorList>
    </citation>
    <scope>SUBCELLULAR LOCATION</scope>
    <scope>FUNCTION</scope>
    <scope>DISRUPTION PHENOTYPE</scope>
</reference>
<reference key="9">
    <citation type="journal article" date="2018" name="Biochem. J.">
        <title>Deubiquitinating enzyme USP9X regulates cellular clock function by modulating the ubiquitination and degradation of a core circadian protein BMAL1.</title>
        <authorList>
            <person name="Zhang Y."/>
            <person name="Duan C."/>
            <person name="Yang J."/>
            <person name="Chen S."/>
            <person name="Liu Q."/>
            <person name="Zhou L."/>
            <person name="Huang Z."/>
            <person name="Xu Y."/>
            <person name="Xu G."/>
        </authorList>
    </citation>
    <scope>FUNCTION</scope>
    <scope>CATALYTIC ACTIVITY</scope>
</reference>
<reference key="10">
    <citation type="journal article" date="2019" name="PLoS ONE">
        <title>The Gag protein PEG10 binds to RNA and regulates trophoblast stem cell lineage specification.</title>
        <authorList>
            <person name="Abed M."/>
            <person name="Verschueren E."/>
            <person name="Budayeva H."/>
            <person name="Liu P."/>
            <person name="Kirkpatrick D.S."/>
            <person name="Reja R."/>
            <person name="Kummerfeld S.K."/>
            <person name="Webster J.D."/>
            <person name="Gierke S."/>
            <person name="Reichelt M."/>
            <person name="Anderson K.R."/>
            <person name="Newman R.J."/>
            <person name="Roose-Girma M."/>
            <person name="Modrusan Z."/>
            <person name="Pektas H."/>
            <person name="Maltepe E."/>
            <person name="Newton K."/>
            <person name="Dixit V.M."/>
        </authorList>
    </citation>
    <scope>FUNCTION</scope>
    <scope>CATALYTIC ACTIVITY</scope>
    <scope>ACTIVE SITE</scope>
    <scope>MUTAGENESIS OF CYS-1566</scope>
</reference>
<reference key="11">
    <citation type="journal article" date="2020" name="Cell Rep.">
        <title>mTORC2 Assembly Is Regulated by USP9X-Mediated Deubiquitination of RICTOR.</title>
        <authorList>
            <person name="Wrobel L."/>
            <person name="Siddiqi F.H."/>
            <person name="Hill S.M."/>
            <person name="Son S.M."/>
            <person name="Karabiyik C."/>
            <person name="Kim H."/>
            <person name="Rubinsztein D.C."/>
        </authorList>
    </citation>
    <scope>TISSUE SPECIFICITY</scope>
</reference>
<comment type="function">
    <text evidence="1 5 6 7 8">Deubiquitinase involved both in the processing of ubiquitin precursors and of ubiquitinated proteins (PubMed:12895410, PubMed:29626158, PubMed:30951545). May therefore play an important regulatory role at the level of protein turnover by preventing degradation of proteins through the removal of conjugated ubiquitin (PubMed:29626158, PubMed:30951545). Specifically hydrolyzes 'Lys-11'-, followed by 'Lys-63'-, 'Lys-48'- and 'Lys-6'-linked polyubiquitins chains (By similarity). Essential component of TGF-beta/BMP signaling cascade (By similarity). Specifically deubiquitinates monoubiquitinated SMAD4, opposing the activity of E3 ubiquitin-protein ligase TRIM33 (By similarity). Deubiquitinates alkylation repair enzyme ALKBH3 (By similarity). OTUD4 recruits USP7 and USP9X to stabilize ALKBH3, thereby promoting the repair of alkylated DNA lesions (By similarity). Deubiquitinates RNA demethylase enzyme ALKBH5, promoting its stability (By similarity). Deubiquitinates mTORC2 complex component RICTOR at 'Lys-294' by removing 'Lys-63'-linked polyubiquitin chains, stabilizing RICTOR and enhancing its binding to MTOR, thus promoting mTORC2 complex assembly (By similarity). Regulates chromosome alignment and segregation in mitosis by regulating the localization of BIRC5/survivin to mitotic centromeres (By similarity). Involved in axonal growth and neuronal cell migration (PubMed:24607389). Regulates cellular clock function by enhancing the protein stability and transcriptional activity of the core circadian protein BMAL1 via its deubiquitinating activity (PubMed:29626158). Acts as a regulator of peroxisome import by mediating deubiquitination of PEX5: specifically deubiquitinates PEX5 monoubiquitinated at 'Cys-11' following its retrotranslocation into the cytosol, resetting PEX5 for a subsequent import cycle (By similarity). Deubiquitinates PEG10 (PubMed:30951545). Inhibits the activation of the Hippo signaling pathway via deubiquitination of AMOTL2 at 'Lys-337' and 'Lys-404' which prohibits its interaction with and activation of LATS2. Loss of LATS2 activation and subsequent loss of YAP1 phosphorylation results in an increase in YAP1-driven transcription of target genes (By similarity).</text>
</comment>
<comment type="catalytic activity">
    <reaction evidence="5 7 8">
        <text>Thiol-dependent hydrolysis of ester, thioester, amide, peptide and isopeptide bonds formed by the C-terminal Gly of ubiquitin (a 76-residue protein attached to proteins as an intracellular targeting signal).</text>
        <dbReference type="EC" id="3.4.19.12"/>
    </reaction>
</comment>
<comment type="subunit">
    <text evidence="1">Interacts with SMAD4, MARK4, NUAK1 and BIRC5/survivin. Interacts with DCX. Interacts with OTUD4 and USP7; the interaction is direct.</text>
</comment>
<comment type="interaction">
    <interactant intactId="EBI-2214043">
        <id>P70398</id>
    </interactant>
    <interactant intactId="EBI-719999">
        <id>A5PKW4</id>
        <label>PSD</label>
    </interactant>
    <organismsDiffer>true</organismsDiffer>
    <experiments>3</experiments>
</comment>
<comment type="interaction">
    <interactant intactId="EBI-2214043">
        <id>P70398</id>
    </interactant>
    <interactant intactId="EBI-347263">
        <id>Q13485</id>
        <label>SMAD4</label>
    </interactant>
    <organismsDiffer>true</organismsDiffer>
    <experiments>4</experiments>
</comment>
<comment type="subcellular location">
    <subcellularLocation>
        <location evidence="1">Cytoplasm</location>
        <location evidence="1">Cytosol</location>
    </subcellularLocation>
    <subcellularLocation>
        <location evidence="6">Cell projection</location>
        <location evidence="6">Growth cone</location>
    </subcellularLocation>
    <subcellularLocation>
        <location evidence="1">Cytoplasm</location>
        <location evidence="1">Cytoskeleton</location>
        <location evidence="1">Cilium axoneme</location>
    </subcellularLocation>
</comment>
<comment type="tissue specificity">
    <text evidence="9 10">Highest levels in liver and brain with expression also detected in heart, muscle, spleen and kidney (at protein leve) (PubMed:33378666). Ubiquitously expressed in adult tissues (PubMed:9178254).</text>
</comment>
<comment type="developmental stage">
    <text evidence="10">At least expressed from 17 dpc to 21 postnatal days.</text>
</comment>
<comment type="disruption phenotype">
    <text evidence="6">Brain-specific USP9X deletion results in early postnatal death, whereas forebrain-specific deletion is compatible with survival to adulthood. In the absence of USP9X the cortical architecture is disorganized, and neurons display reduced neurite growth.</text>
</comment>
<comment type="similarity">
    <text evidence="13">Belongs to the peptidase C19 family.</text>
</comment>
<evidence type="ECO:0000250" key="1">
    <source>
        <dbReference type="UniProtKB" id="Q93008"/>
    </source>
</evidence>
<evidence type="ECO:0000255" key="2">
    <source>
        <dbReference type="PROSITE-ProRule" id="PRU10092"/>
    </source>
</evidence>
<evidence type="ECO:0000255" key="3">
    <source>
        <dbReference type="PROSITE-ProRule" id="PRU10093"/>
    </source>
</evidence>
<evidence type="ECO:0000256" key="4">
    <source>
        <dbReference type="SAM" id="MobiDB-lite"/>
    </source>
</evidence>
<evidence type="ECO:0000269" key="5">
    <source>
    </source>
</evidence>
<evidence type="ECO:0000269" key="6">
    <source>
    </source>
</evidence>
<evidence type="ECO:0000269" key="7">
    <source>
    </source>
</evidence>
<evidence type="ECO:0000269" key="8">
    <source>
    </source>
</evidence>
<evidence type="ECO:0000269" key="9">
    <source>
    </source>
</evidence>
<evidence type="ECO:0000269" key="10">
    <source>
    </source>
</evidence>
<evidence type="ECO:0000303" key="11">
    <source>
    </source>
</evidence>
<evidence type="ECO:0000303" key="12">
    <source>
    </source>
</evidence>
<evidence type="ECO:0000305" key="13"/>
<evidence type="ECO:0000305" key="14">
    <source>
    </source>
</evidence>
<evidence type="ECO:0000312" key="15">
    <source>
        <dbReference type="MGI" id="MGI:894681"/>
    </source>
</evidence>
<evidence type="ECO:0007744" key="16">
    <source>
    </source>
</evidence>
<evidence type="ECO:0007744" key="17">
    <source>
    </source>
</evidence>
<evidence type="ECO:0007744" key="18">
    <source>
    </source>
</evidence>